<protein>
    <recommendedName>
        <fullName evidence="1">2-dehydro-3-deoxyphosphooctonate aldolase</fullName>
        <ecNumber evidence="1">2.5.1.55</ecNumber>
    </recommendedName>
    <alternativeName>
        <fullName evidence="1">3-deoxy-D-manno-octulosonic acid 8-phosphate synthase</fullName>
    </alternativeName>
    <alternativeName>
        <fullName evidence="1">KDO-8-phosphate synthase</fullName>
        <shortName evidence="1">KDO 8-P synthase</shortName>
        <shortName evidence="1">KDOPS</shortName>
    </alternativeName>
    <alternativeName>
        <fullName evidence="1">Phospho-2-dehydro-3-deoxyoctonate aldolase</fullName>
    </alternativeName>
</protein>
<proteinExistence type="inferred from homology"/>
<name>KDSA_DESAL</name>
<gene>
    <name evidence="1" type="primary">kdsA</name>
    <name type="ordered locus">Dalk_1366</name>
</gene>
<accession>B8F9X0</accession>
<comment type="catalytic activity">
    <reaction evidence="1">
        <text>D-arabinose 5-phosphate + phosphoenolpyruvate + H2O = 3-deoxy-alpha-D-manno-2-octulosonate-8-phosphate + phosphate</text>
        <dbReference type="Rhea" id="RHEA:14053"/>
        <dbReference type="ChEBI" id="CHEBI:15377"/>
        <dbReference type="ChEBI" id="CHEBI:43474"/>
        <dbReference type="ChEBI" id="CHEBI:57693"/>
        <dbReference type="ChEBI" id="CHEBI:58702"/>
        <dbReference type="ChEBI" id="CHEBI:85985"/>
        <dbReference type="EC" id="2.5.1.55"/>
    </reaction>
</comment>
<comment type="pathway">
    <text evidence="1">Carbohydrate biosynthesis; 3-deoxy-D-manno-octulosonate biosynthesis; 3-deoxy-D-manno-octulosonate from D-ribulose 5-phosphate: step 2/3.</text>
</comment>
<comment type="pathway">
    <text evidence="1">Bacterial outer membrane biogenesis; lipopolysaccharide biosynthesis.</text>
</comment>
<comment type="subcellular location">
    <subcellularLocation>
        <location evidence="1">Cytoplasm</location>
    </subcellularLocation>
</comment>
<comment type="similarity">
    <text evidence="1">Belongs to the KdsA family.</text>
</comment>
<organism>
    <name type="scientific">Desulfatibacillum aliphaticivorans</name>
    <dbReference type="NCBI Taxonomy" id="218208"/>
    <lineage>
        <taxon>Bacteria</taxon>
        <taxon>Pseudomonadati</taxon>
        <taxon>Thermodesulfobacteriota</taxon>
        <taxon>Desulfobacteria</taxon>
        <taxon>Desulfobacterales</taxon>
        <taxon>Desulfatibacillaceae</taxon>
        <taxon>Desulfatibacillum</taxon>
    </lineage>
</organism>
<evidence type="ECO:0000255" key="1">
    <source>
        <dbReference type="HAMAP-Rule" id="MF_00056"/>
    </source>
</evidence>
<dbReference type="EC" id="2.5.1.55" evidence="1"/>
<dbReference type="EMBL" id="CP001322">
    <property type="protein sequence ID" value="ACL03066.1"/>
    <property type="molecule type" value="Genomic_DNA"/>
</dbReference>
<dbReference type="RefSeq" id="WP_012610501.1">
    <property type="nucleotide sequence ID" value="NC_011768.1"/>
</dbReference>
<dbReference type="SMR" id="B8F9X0"/>
<dbReference type="KEGG" id="dal:Dalk_1366"/>
<dbReference type="eggNOG" id="COG2877">
    <property type="taxonomic scope" value="Bacteria"/>
</dbReference>
<dbReference type="HOGENOM" id="CLU_036666_0_0_7"/>
<dbReference type="UniPathway" id="UPA00030"/>
<dbReference type="UniPathway" id="UPA00357">
    <property type="reaction ID" value="UER00474"/>
</dbReference>
<dbReference type="Proteomes" id="UP000000739">
    <property type="component" value="Chromosome"/>
</dbReference>
<dbReference type="GO" id="GO:0005737">
    <property type="term" value="C:cytoplasm"/>
    <property type="evidence" value="ECO:0007669"/>
    <property type="project" value="UniProtKB-SubCell"/>
</dbReference>
<dbReference type="GO" id="GO:0008676">
    <property type="term" value="F:3-deoxy-8-phosphooctulonate synthase activity"/>
    <property type="evidence" value="ECO:0007669"/>
    <property type="project" value="UniProtKB-UniRule"/>
</dbReference>
<dbReference type="GO" id="GO:0019294">
    <property type="term" value="P:keto-3-deoxy-D-manno-octulosonic acid biosynthetic process"/>
    <property type="evidence" value="ECO:0007669"/>
    <property type="project" value="UniProtKB-UniRule"/>
</dbReference>
<dbReference type="Gene3D" id="3.20.20.70">
    <property type="entry name" value="Aldolase class I"/>
    <property type="match status" value="1"/>
</dbReference>
<dbReference type="HAMAP" id="MF_00056">
    <property type="entry name" value="KDO8P_synth"/>
    <property type="match status" value="1"/>
</dbReference>
<dbReference type="InterPro" id="IPR013785">
    <property type="entry name" value="Aldolase_TIM"/>
</dbReference>
<dbReference type="InterPro" id="IPR006218">
    <property type="entry name" value="DAHP1/KDSA"/>
</dbReference>
<dbReference type="InterPro" id="IPR006269">
    <property type="entry name" value="KDO8P_synthase"/>
</dbReference>
<dbReference type="NCBIfam" id="TIGR01362">
    <property type="entry name" value="KDO8P_synth"/>
    <property type="match status" value="1"/>
</dbReference>
<dbReference type="NCBIfam" id="NF003543">
    <property type="entry name" value="PRK05198.1"/>
    <property type="match status" value="1"/>
</dbReference>
<dbReference type="PANTHER" id="PTHR21057">
    <property type="entry name" value="PHOSPHO-2-DEHYDRO-3-DEOXYHEPTONATE ALDOLASE"/>
    <property type="match status" value="1"/>
</dbReference>
<dbReference type="Pfam" id="PF00793">
    <property type="entry name" value="DAHP_synth_1"/>
    <property type="match status" value="1"/>
</dbReference>
<dbReference type="SUPFAM" id="SSF51569">
    <property type="entry name" value="Aldolase"/>
    <property type="match status" value="1"/>
</dbReference>
<feature type="chain" id="PRO_1000116875" description="2-dehydro-3-deoxyphosphooctonate aldolase">
    <location>
        <begin position="1"/>
        <end position="273"/>
    </location>
</feature>
<keyword id="KW-0963">Cytoplasm</keyword>
<keyword id="KW-0448">Lipopolysaccharide biosynthesis</keyword>
<keyword id="KW-1185">Reference proteome</keyword>
<keyword id="KW-0808">Transferase</keyword>
<reference key="1">
    <citation type="journal article" date="2012" name="Environ. Microbiol.">
        <title>The genome sequence of Desulfatibacillum alkenivorans AK-01: a blueprint for anaerobic alkane oxidation.</title>
        <authorList>
            <person name="Callaghan A.V."/>
            <person name="Morris B.E."/>
            <person name="Pereira I.A."/>
            <person name="McInerney M.J."/>
            <person name="Austin R.N."/>
            <person name="Groves J.T."/>
            <person name="Kukor J.J."/>
            <person name="Suflita J.M."/>
            <person name="Young L.Y."/>
            <person name="Zylstra G.J."/>
            <person name="Wawrik B."/>
        </authorList>
    </citation>
    <scope>NUCLEOTIDE SEQUENCE [LARGE SCALE GENOMIC DNA]</scope>
    <source>
        <strain>AK-01</strain>
    </source>
</reference>
<sequence>MTNTFSIGNNMNVGLGAPLLLIAGPCVIENEEKTLEIAERIKGIVRDMDVNFVFKASFDKANRTSIDSFRGPGLEQGLAILGKVKSRLGLPVISDVHSPDQVGPASEVLDILQIPAFLCRQTDLLTAAGNSGKPVNVKKGQFVGPWDMKHVTGKVLSTGNERIMLTERGSSFGYNNLVVDFRNFSIMRDLGFPVVFDATHSVQMPGGLGSCSGGDRSYVPLLARAAAAAGVDGVFFEVHTDPDKALCDGPNSLTMEMLESILPQLLAIRKAAS</sequence>